<keyword id="KW-0067">ATP-binding</keyword>
<keyword id="KW-0315">Glutamine amidotransferase</keyword>
<keyword id="KW-0436">Ligase</keyword>
<keyword id="KW-0460">Magnesium</keyword>
<keyword id="KW-0479">Metal-binding</keyword>
<keyword id="KW-0547">Nucleotide-binding</keyword>
<keyword id="KW-0665">Pyrimidine biosynthesis</keyword>
<evidence type="ECO:0000255" key="1">
    <source>
        <dbReference type="HAMAP-Rule" id="MF_01227"/>
    </source>
</evidence>
<name>PYRG_PSEPG</name>
<comment type="function">
    <text evidence="1">Catalyzes the ATP-dependent amination of UTP to CTP with either L-glutamine or ammonia as the source of nitrogen. Regulates intracellular CTP levels through interactions with the four ribonucleotide triphosphates.</text>
</comment>
<comment type="catalytic activity">
    <reaction evidence="1">
        <text>UTP + L-glutamine + ATP + H2O = CTP + L-glutamate + ADP + phosphate + 2 H(+)</text>
        <dbReference type="Rhea" id="RHEA:26426"/>
        <dbReference type="ChEBI" id="CHEBI:15377"/>
        <dbReference type="ChEBI" id="CHEBI:15378"/>
        <dbReference type="ChEBI" id="CHEBI:29985"/>
        <dbReference type="ChEBI" id="CHEBI:30616"/>
        <dbReference type="ChEBI" id="CHEBI:37563"/>
        <dbReference type="ChEBI" id="CHEBI:43474"/>
        <dbReference type="ChEBI" id="CHEBI:46398"/>
        <dbReference type="ChEBI" id="CHEBI:58359"/>
        <dbReference type="ChEBI" id="CHEBI:456216"/>
        <dbReference type="EC" id="6.3.4.2"/>
    </reaction>
</comment>
<comment type="catalytic activity">
    <reaction evidence="1">
        <text>L-glutamine + H2O = L-glutamate + NH4(+)</text>
        <dbReference type="Rhea" id="RHEA:15889"/>
        <dbReference type="ChEBI" id="CHEBI:15377"/>
        <dbReference type="ChEBI" id="CHEBI:28938"/>
        <dbReference type="ChEBI" id="CHEBI:29985"/>
        <dbReference type="ChEBI" id="CHEBI:58359"/>
    </reaction>
</comment>
<comment type="catalytic activity">
    <reaction evidence="1">
        <text>UTP + NH4(+) + ATP = CTP + ADP + phosphate + 2 H(+)</text>
        <dbReference type="Rhea" id="RHEA:16597"/>
        <dbReference type="ChEBI" id="CHEBI:15378"/>
        <dbReference type="ChEBI" id="CHEBI:28938"/>
        <dbReference type="ChEBI" id="CHEBI:30616"/>
        <dbReference type="ChEBI" id="CHEBI:37563"/>
        <dbReference type="ChEBI" id="CHEBI:43474"/>
        <dbReference type="ChEBI" id="CHEBI:46398"/>
        <dbReference type="ChEBI" id="CHEBI:456216"/>
    </reaction>
</comment>
<comment type="activity regulation">
    <text evidence="1">Allosterically activated by GTP, when glutamine is the substrate; GTP has no effect on the reaction when ammonia is the substrate. The allosteric effector GTP functions by stabilizing the protein conformation that binds the tetrahedral intermediate(s) formed during glutamine hydrolysis. Inhibited by the product CTP, via allosteric rather than competitive inhibition.</text>
</comment>
<comment type="pathway">
    <text evidence="1">Pyrimidine metabolism; CTP biosynthesis via de novo pathway; CTP from UDP: step 2/2.</text>
</comment>
<comment type="subunit">
    <text evidence="1">Homotetramer.</text>
</comment>
<comment type="miscellaneous">
    <text evidence="1">CTPSs have evolved a hybrid strategy for distinguishing between UTP and CTP. The overlapping regions of the product feedback inhibitory and substrate sites recognize a common feature in both compounds, the triphosphate moiety. To differentiate isosteric substrate and product pyrimidine rings, an additional pocket far from the expected kinase/ligase catalytic site, specifically recognizes the cytosine and ribose portions of the product inhibitor.</text>
</comment>
<comment type="similarity">
    <text evidence="1">Belongs to the CTP synthase family.</text>
</comment>
<dbReference type="EC" id="6.3.4.2" evidence="1"/>
<dbReference type="EMBL" id="CP000926">
    <property type="protein sequence ID" value="ABY97072.1"/>
    <property type="molecule type" value="Genomic_DNA"/>
</dbReference>
<dbReference type="RefSeq" id="WP_012270851.1">
    <property type="nucleotide sequence ID" value="NC_010322.1"/>
</dbReference>
<dbReference type="SMR" id="B0KSB7"/>
<dbReference type="MEROPS" id="C26.964"/>
<dbReference type="KEGG" id="ppg:PputGB1_1164"/>
<dbReference type="eggNOG" id="COG0504">
    <property type="taxonomic scope" value="Bacteria"/>
</dbReference>
<dbReference type="HOGENOM" id="CLU_011675_5_0_6"/>
<dbReference type="UniPathway" id="UPA00159">
    <property type="reaction ID" value="UER00277"/>
</dbReference>
<dbReference type="Proteomes" id="UP000002157">
    <property type="component" value="Chromosome"/>
</dbReference>
<dbReference type="GO" id="GO:0005829">
    <property type="term" value="C:cytosol"/>
    <property type="evidence" value="ECO:0007669"/>
    <property type="project" value="TreeGrafter"/>
</dbReference>
<dbReference type="GO" id="GO:0005524">
    <property type="term" value="F:ATP binding"/>
    <property type="evidence" value="ECO:0007669"/>
    <property type="project" value="UniProtKB-KW"/>
</dbReference>
<dbReference type="GO" id="GO:0003883">
    <property type="term" value="F:CTP synthase activity"/>
    <property type="evidence" value="ECO:0007669"/>
    <property type="project" value="UniProtKB-UniRule"/>
</dbReference>
<dbReference type="GO" id="GO:0004359">
    <property type="term" value="F:glutaminase activity"/>
    <property type="evidence" value="ECO:0007669"/>
    <property type="project" value="RHEA"/>
</dbReference>
<dbReference type="GO" id="GO:0042802">
    <property type="term" value="F:identical protein binding"/>
    <property type="evidence" value="ECO:0007669"/>
    <property type="project" value="TreeGrafter"/>
</dbReference>
<dbReference type="GO" id="GO:0046872">
    <property type="term" value="F:metal ion binding"/>
    <property type="evidence" value="ECO:0007669"/>
    <property type="project" value="UniProtKB-KW"/>
</dbReference>
<dbReference type="GO" id="GO:0044210">
    <property type="term" value="P:'de novo' CTP biosynthetic process"/>
    <property type="evidence" value="ECO:0007669"/>
    <property type="project" value="UniProtKB-UniRule"/>
</dbReference>
<dbReference type="GO" id="GO:0019856">
    <property type="term" value="P:pyrimidine nucleobase biosynthetic process"/>
    <property type="evidence" value="ECO:0007669"/>
    <property type="project" value="TreeGrafter"/>
</dbReference>
<dbReference type="CDD" id="cd03113">
    <property type="entry name" value="CTPS_N"/>
    <property type="match status" value="1"/>
</dbReference>
<dbReference type="CDD" id="cd01746">
    <property type="entry name" value="GATase1_CTP_Synthase"/>
    <property type="match status" value="1"/>
</dbReference>
<dbReference type="FunFam" id="3.40.50.300:FF:000009">
    <property type="entry name" value="CTP synthase"/>
    <property type="match status" value="1"/>
</dbReference>
<dbReference type="FunFam" id="3.40.50.880:FF:000002">
    <property type="entry name" value="CTP synthase"/>
    <property type="match status" value="1"/>
</dbReference>
<dbReference type="Gene3D" id="3.40.50.880">
    <property type="match status" value="1"/>
</dbReference>
<dbReference type="Gene3D" id="3.40.50.300">
    <property type="entry name" value="P-loop containing nucleotide triphosphate hydrolases"/>
    <property type="match status" value="1"/>
</dbReference>
<dbReference type="HAMAP" id="MF_01227">
    <property type="entry name" value="PyrG"/>
    <property type="match status" value="1"/>
</dbReference>
<dbReference type="InterPro" id="IPR029062">
    <property type="entry name" value="Class_I_gatase-like"/>
</dbReference>
<dbReference type="InterPro" id="IPR004468">
    <property type="entry name" value="CTP_synthase"/>
</dbReference>
<dbReference type="InterPro" id="IPR017456">
    <property type="entry name" value="CTP_synthase_N"/>
</dbReference>
<dbReference type="InterPro" id="IPR017926">
    <property type="entry name" value="GATASE"/>
</dbReference>
<dbReference type="InterPro" id="IPR033828">
    <property type="entry name" value="GATase1_CTP_Synthase"/>
</dbReference>
<dbReference type="InterPro" id="IPR027417">
    <property type="entry name" value="P-loop_NTPase"/>
</dbReference>
<dbReference type="NCBIfam" id="NF003792">
    <property type="entry name" value="PRK05380.1"/>
    <property type="match status" value="1"/>
</dbReference>
<dbReference type="NCBIfam" id="TIGR00337">
    <property type="entry name" value="PyrG"/>
    <property type="match status" value="1"/>
</dbReference>
<dbReference type="PANTHER" id="PTHR11550">
    <property type="entry name" value="CTP SYNTHASE"/>
    <property type="match status" value="1"/>
</dbReference>
<dbReference type="PANTHER" id="PTHR11550:SF0">
    <property type="entry name" value="CTP SYNTHASE-RELATED"/>
    <property type="match status" value="1"/>
</dbReference>
<dbReference type="Pfam" id="PF06418">
    <property type="entry name" value="CTP_synth_N"/>
    <property type="match status" value="1"/>
</dbReference>
<dbReference type="Pfam" id="PF00117">
    <property type="entry name" value="GATase"/>
    <property type="match status" value="1"/>
</dbReference>
<dbReference type="SUPFAM" id="SSF52317">
    <property type="entry name" value="Class I glutamine amidotransferase-like"/>
    <property type="match status" value="1"/>
</dbReference>
<dbReference type="SUPFAM" id="SSF52540">
    <property type="entry name" value="P-loop containing nucleoside triphosphate hydrolases"/>
    <property type="match status" value="1"/>
</dbReference>
<dbReference type="PROSITE" id="PS51273">
    <property type="entry name" value="GATASE_TYPE_1"/>
    <property type="match status" value="1"/>
</dbReference>
<reference key="1">
    <citation type="submission" date="2008-01" db="EMBL/GenBank/DDBJ databases">
        <title>Complete sequence of Pseudomonas putida GB-1.</title>
        <authorList>
            <consortium name="US DOE Joint Genome Institute"/>
            <person name="Copeland A."/>
            <person name="Lucas S."/>
            <person name="Lapidus A."/>
            <person name="Barry K."/>
            <person name="Glavina del Rio T."/>
            <person name="Dalin E."/>
            <person name="Tice H."/>
            <person name="Pitluck S."/>
            <person name="Bruce D."/>
            <person name="Goodwin L."/>
            <person name="Chertkov O."/>
            <person name="Brettin T."/>
            <person name="Detter J.C."/>
            <person name="Han C."/>
            <person name="Kuske C.R."/>
            <person name="Schmutz J."/>
            <person name="Larimer F."/>
            <person name="Land M."/>
            <person name="Hauser L."/>
            <person name="Kyrpides N."/>
            <person name="Kim E."/>
            <person name="McCarthy J.K."/>
            <person name="Richardson P."/>
        </authorList>
    </citation>
    <scope>NUCLEOTIDE SEQUENCE [LARGE SCALE GENOMIC DNA]</scope>
    <source>
        <strain>GB-1</strain>
    </source>
</reference>
<sequence>MTRYIFVTGGVVSSLGKGIASASLAAILEARGLKVTMLKLDPYINVDPGTMSPFQHGEVFVTHDGAETDLDLGHYERFIRTTMTQNNNFTTGRIYEHVLRKERRGDYLGATIQVIPHITDEIKRRIIKGAGDADVALVEIGGTVGDIESQPFLEAIRQLRVEVGSKRAMLMHLTLVPYIATAGETKTKPTQHSVKELRSIGLQPDVLICRSDHPVDASSRRKIALFTNVEERAVISLEDVDTIYKIPGVLHAQGLDDFVVERFGLQCNGADLSEWDKVVDAKLNPEHEVTIAMVGKYMELLDAYKSLIEAMSHAGITNRTKVNLRYIDSEDIENQGTSLLEGADAILVPGGFGLRGVEGKITAVQYARENKVPYLGICLGMQVAVIEFARNVMGWKDANSTEFDRNSGHPVVGLITEWADATGAVETRDEASDLGGTMRLGAQDCQLAAGSKVHDCYGKDVITERHRHRYEVNNNLLPQLVDAGLVVSGRSEDGALVEVVESKDHPWFVACQFHPEFTSTPRDGHPLFSGFVKAALAQKNKA</sequence>
<proteinExistence type="inferred from homology"/>
<accession>B0KSB7</accession>
<protein>
    <recommendedName>
        <fullName evidence="1">CTP synthase</fullName>
        <ecNumber evidence="1">6.3.4.2</ecNumber>
    </recommendedName>
    <alternativeName>
        <fullName evidence="1">Cytidine 5'-triphosphate synthase</fullName>
    </alternativeName>
    <alternativeName>
        <fullName evidence="1">Cytidine triphosphate synthetase</fullName>
        <shortName evidence="1">CTP synthetase</shortName>
        <shortName evidence="1">CTPS</shortName>
    </alternativeName>
    <alternativeName>
        <fullName evidence="1">UTP--ammonia ligase</fullName>
    </alternativeName>
</protein>
<gene>
    <name evidence="1" type="primary">pyrG</name>
    <name type="ordered locus">PputGB1_1164</name>
</gene>
<feature type="chain" id="PRO_1000139536" description="CTP synthase">
    <location>
        <begin position="1"/>
        <end position="542"/>
    </location>
</feature>
<feature type="domain" description="Glutamine amidotransferase type-1" evidence="1">
    <location>
        <begin position="290"/>
        <end position="541"/>
    </location>
</feature>
<feature type="region of interest" description="Amidoligase domain" evidence="1">
    <location>
        <begin position="1"/>
        <end position="265"/>
    </location>
</feature>
<feature type="active site" description="Nucleophile; for glutamine hydrolysis" evidence="1">
    <location>
        <position position="378"/>
    </location>
</feature>
<feature type="active site" evidence="1">
    <location>
        <position position="514"/>
    </location>
</feature>
<feature type="active site" evidence="1">
    <location>
        <position position="516"/>
    </location>
</feature>
<feature type="binding site" evidence="1">
    <location>
        <position position="13"/>
    </location>
    <ligand>
        <name>CTP</name>
        <dbReference type="ChEBI" id="CHEBI:37563"/>
        <note>allosteric inhibitor</note>
    </ligand>
</feature>
<feature type="binding site" evidence="1">
    <location>
        <position position="13"/>
    </location>
    <ligand>
        <name>UTP</name>
        <dbReference type="ChEBI" id="CHEBI:46398"/>
    </ligand>
</feature>
<feature type="binding site" evidence="1">
    <location>
        <begin position="14"/>
        <end position="19"/>
    </location>
    <ligand>
        <name>ATP</name>
        <dbReference type="ChEBI" id="CHEBI:30616"/>
    </ligand>
</feature>
<feature type="binding site" evidence="1">
    <location>
        <position position="71"/>
    </location>
    <ligand>
        <name>ATP</name>
        <dbReference type="ChEBI" id="CHEBI:30616"/>
    </ligand>
</feature>
<feature type="binding site" evidence="1">
    <location>
        <position position="71"/>
    </location>
    <ligand>
        <name>Mg(2+)</name>
        <dbReference type="ChEBI" id="CHEBI:18420"/>
    </ligand>
</feature>
<feature type="binding site" evidence="1">
    <location>
        <position position="139"/>
    </location>
    <ligand>
        <name>Mg(2+)</name>
        <dbReference type="ChEBI" id="CHEBI:18420"/>
    </ligand>
</feature>
<feature type="binding site" evidence="1">
    <location>
        <begin position="146"/>
        <end position="148"/>
    </location>
    <ligand>
        <name>CTP</name>
        <dbReference type="ChEBI" id="CHEBI:37563"/>
        <note>allosteric inhibitor</note>
    </ligand>
</feature>
<feature type="binding site" evidence="1">
    <location>
        <begin position="186"/>
        <end position="191"/>
    </location>
    <ligand>
        <name>CTP</name>
        <dbReference type="ChEBI" id="CHEBI:37563"/>
        <note>allosteric inhibitor</note>
    </ligand>
</feature>
<feature type="binding site" evidence="1">
    <location>
        <begin position="186"/>
        <end position="191"/>
    </location>
    <ligand>
        <name>UTP</name>
        <dbReference type="ChEBI" id="CHEBI:46398"/>
    </ligand>
</feature>
<feature type="binding site" evidence="1">
    <location>
        <position position="222"/>
    </location>
    <ligand>
        <name>CTP</name>
        <dbReference type="ChEBI" id="CHEBI:37563"/>
        <note>allosteric inhibitor</note>
    </ligand>
</feature>
<feature type="binding site" evidence="1">
    <location>
        <position position="222"/>
    </location>
    <ligand>
        <name>UTP</name>
        <dbReference type="ChEBI" id="CHEBI:46398"/>
    </ligand>
</feature>
<feature type="binding site" evidence="1">
    <location>
        <position position="351"/>
    </location>
    <ligand>
        <name>L-glutamine</name>
        <dbReference type="ChEBI" id="CHEBI:58359"/>
    </ligand>
</feature>
<feature type="binding site" evidence="1">
    <location>
        <begin position="379"/>
        <end position="382"/>
    </location>
    <ligand>
        <name>L-glutamine</name>
        <dbReference type="ChEBI" id="CHEBI:58359"/>
    </ligand>
</feature>
<feature type="binding site" evidence="1">
    <location>
        <position position="402"/>
    </location>
    <ligand>
        <name>L-glutamine</name>
        <dbReference type="ChEBI" id="CHEBI:58359"/>
    </ligand>
</feature>
<feature type="binding site" evidence="1">
    <location>
        <position position="469"/>
    </location>
    <ligand>
        <name>L-glutamine</name>
        <dbReference type="ChEBI" id="CHEBI:58359"/>
    </ligand>
</feature>
<organism>
    <name type="scientific">Pseudomonas putida (strain GB-1)</name>
    <dbReference type="NCBI Taxonomy" id="76869"/>
    <lineage>
        <taxon>Bacteria</taxon>
        <taxon>Pseudomonadati</taxon>
        <taxon>Pseudomonadota</taxon>
        <taxon>Gammaproteobacteria</taxon>
        <taxon>Pseudomonadales</taxon>
        <taxon>Pseudomonadaceae</taxon>
        <taxon>Pseudomonas</taxon>
    </lineage>
</organism>